<proteinExistence type="evidence at protein level"/>
<reference key="1">
    <citation type="journal article" date="1999" name="Nature">
        <title>Sequence and analysis of chromosome 2 of the plant Arabidopsis thaliana.</title>
        <authorList>
            <person name="Lin X."/>
            <person name="Kaul S."/>
            <person name="Rounsley S.D."/>
            <person name="Shea T.P."/>
            <person name="Benito M.-I."/>
            <person name="Town C.D."/>
            <person name="Fujii C.Y."/>
            <person name="Mason T.M."/>
            <person name="Bowman C.L."/>
            <person name="Barnstead M.E."/>
            <person name="Feldblyum T.V."/>
            <person name="Buell C.R."/>
            <person name="Ketchum K.A."/>
            <person name="Lee J.J."/>
            <person name="Ronning C.M."/>
            <person name="Koo H.L."/>
            <person name="Moffat K.S."/>
            <person name="Cronin L.A."/>
            <person name="Shen M."/>
            <person name="Pai G."/>
            <person name="Van Aken S."/>
            <person name="Umayam L."/>
            <person name="Tallon L.J."/>
            <person name="Gill J.E."/>
            <person name="Adams M.D."/>
            <person name="Carrera A.J."/>
            <person name="Creasy T.H."/>
            <person name="Goodman H.M."/>
            <person name="Somerville C.R."/>
            <person name="Copenhaver G.P."/>
            <person name="Preuss D."/>
            <person name="Nierman W.C."/>
            <person name="White O."/>
            <person name="Eisen J.A."/>
            <person name="Salzberg S.L."/>
            <person name="Fraser C.M."/>
            <person name="Venter J.C."/>
        </authorList>
    </citation>
    <scope>NUCLEOTIDE SEQUENCE [LARGE SCALE GENOMIC DNA]</scope>
    <source>
        <strain>cv. Columbia</strain>
    </source>
</reference>
<reference key="2">
    <citation type="journal article" date="2017" name="Plant J.">
        <title>Araport11: a complete reannotation of the Arabidopsis thaliana reference genome.</title>
        <authorList>
            <person name="Cheng C.Y."/>
            <person name="Krishnakumar V."/>
            <person name="Chan A.P."/>
            <person name="Thibaud-Nissen F."/>
            <person name="Schobel S."/>
            <person name="Town C.D."/>
        </authorList>
    </citation>
    <scope>GENOME REANNOTATION</scope>
    <source>
        <strain>cv. Columbia</strain>
    </source>
</reference>
<reference key="3">
    <citation type="submission" date="2006-07" db="EMBL/GenBank/DDBJ databases">
        <title>Large-scale analysis of RIKEN Arabidopsis full-length (RAFL) cDNAs.</title>
        <authorList>
            <person name="Totoki Y."/>
            <person name="Seki M."/>
            <person name="Ishida J."/>
            <person name="Nakajima M."/>
            <person name="Enju A."/>
            <person name="Kamiya A."/>
            <person name="Narusaka M."/>
            <person name="Shin-i T."/>
            <person name="Nakagawa M."/>
            <person name="Sakamoto N."/>
            <person name="Oishi K."/>
            <person name="Kohara Y."/>
            <person name="Kobayashi M."/>
            <person name="Toyoda A."/>
            <person name="Sakaki Y."/>
            <person name="Sakurai T."/>
            <person name="Iida K."/>
            <person name="Akiyama K."/>
            <person name="Satou M."/>
            <person name="Toyoda T."/>
            <person name="Konagaya A."/>
            <person name="Carninci P."/>
            <person name="Kawai J."/>
            <person name="Hayashizaki Y."/>
            <person name="Shinozaki K."/>
        </authorList>
    </citation>
    <scope>NUCLEOTIDE SEQUENCE [LARGE SCALE MRNA]</scope>
    <source>
        <strain>cv. Columbia</strain>
    </source>
</reference>
<reference key="4">
    <citation type="journal article" date="2008" name="Genes Dev.">
        <title>Control of final seed and organ size by the DA1 gene family in Arabidopsis thaliana.</title>
        <authorList>
            <person name="Li Y."/>
            <person name="Zheng L."/>
            <person name="Corke F."/>
            <person name="Smith C."/>
            <person name="Bevan M.W."/>
        </authorList>
    </citation>
    <scope>GENE FAMILY</scope>
    <scope>NOMENCLATURE</scope>
</reference>
<reference key="5">
    <citation type="journal article" date="2011" name="Plant J.">
        <title>Arabidopsis Lateral Root Development 3 is essential for early phloem development and function, and hence for normal root system development.</title>
        <authorList>
            <person name="Ingram P."/>
            <person name="Dettmer J."/>
            <person name="Helariutta Y."/>
            <person name="Malamy J.E."/>
        </authorList>
    </citation>
    <scope>FUNCTION</scope>
    <scope>TISSUE SPECIFICITY</scope>
    <scope>DISRUPTION PHENOTYPE</scope>
</reference>
<reference key="6">
    <citation type="journal article" date="2013" name="Plant Physiol.">
        <title>Control of root meristem size by DA1-RELATED PROTEIN2 in Arabidopsis.</title>
        <authorList>
            <person name="Peng Y."/>
            <person name="Ma W."/>
            <person name="Chen L."/>
            <person name="Yang L."/>
            <person name="Li S."/>
            <person name="Zhao H."/>
            <person name="Zhao Y."/>
            <person name="Jin W."/>
            <person name="Li N."/>
            <person name="Bevan M.W."/>
            <person name="Li X."/>
            <person name="Tong Y."/>
            <person name="Li Y."/>
        </authorList>
    </citation>
    <scope>FUNCTION</scope>
</reference>
<reference key="7">
    <citation type="journal article" date="2015" name="Plant Cell">
        <title>The ubiquitin receptors DA1, DAR1, and DAR2 redundantly regulate endoreduplication by modulating the stability of TCP14/15 in Arabidopsis.</title>
        <authorList>
            <person name="Peng Y."/>
            <person name="Chen L."/>
            <person name="Lu Y."/>
            <person name="Wu Y."/>
            <person name="Dumenil J."/>
            <person name="Zhu Z."/>
            <person name="Bevan M.W."/>
            <person name="Li Y."/>
        </authorList>
    </citation>
    <scope>FUNCTION</scope>
    <scope>INTERACTION WITH UBIQUITIN; TCP14 AND TCP15</scope>
    <scope>DEVELOPMENTAL STAGE</scope>
    <scope>DOMAIN</scope>
</reference>
<reference key="8">
    <citation type="journal article" date="2017" name="Genes Dev.">
        <title>Ubiquitylation activates a peptidase that promotes cleavage and destabilization of its activating E3 ligases and diverse growth regulatory proteins to limit cell proliferation in Arabidopsis.</title>
        <authorList>
            <person name="Dong H."/>
            <person name="Dumenil J."/>
            <person name="Lu F.H."/>
            <person name="Na L."/>
            <person name="Vanhaeren H."/>
            <person name="Naumann C."/>
            <person name="Klecker M."/>
            <person name="Prior R."/>
            <person name="Smith C."/>
            <person name="McKenzie N."/>
            <person name="Saalbach G."/>
            <person name="Chen L."/>
            <person name="Xia T."/>
            <person name="Gonzalez N."/>
            <person name="Seguela M."/>
            <person name="Inze D."/>
            <person name="Dissmeyer N."/>
            <person name="Li Y."/>
            <person name="Bevan M.W."/>
        </authorList>
    </citation>
    <scope>UBIQUITINATION</scope>
</reference>
<feature type="chain" id="PRO_0000396937" description="Protein DA1-related 2">
    <location>
        <begin position="1"/>
        <end position="528"/>
    </location>
</feature>
<feature type="domain" description="UIM 1" evidence="9">
    <location>
        <begin position="99"/>
        <end position="118"/>
    </location>
</feature>
<feature type="domain" description="UIM 2; degenerate" evidence="9">
    <location>
        <begin position="127"/>
        <end position="148"/>
    </location>
</feature>
<feature type="domain" description="LIM zinc-binding" evidence="1">
    <location>
        <begin position="160"/>
        <end position="220"/>
    </location>
</feature>
<feature type="region of interest" description="Disordered" evidence="2">
    <location>
        <begin position="60"/>
        <end position="108"/>
    </location>
</feature>
<feature type="region of interest" description="Disordered" evidence="2">
    <location>
        <begin position="447"/>
        <end position="474"/>
    </location>
</feature>
<feature type="compositionally biased region" description="Basic and acidic residues" evidence="2">
    <location>
        <begin position="91"/>
        <end position="106"/>
    </location>
</feature>
<feature type="compositionally biased region" description="Low complexity" evidence="2">
    <location>
        <begin position="455"/>
        <end position="470"/>
    </location>
</feature>
<dbReference type="EMBL" id="AC003000">
    <property type="protein sequence ID" value="AAB87132.1"/>
    <property type="status" value="ALT_SEQ"/>
    <property type="molecule type" value="Genomic_DNA"/>
</dbReference>
<dbReference type="EMBL" id="CP002685">
    <property type="protein sequence ID" value="AEC09736.1"/>
    <property type="molecule type" value="Genomic_DNA"/>
</dbReference>
<dbReference type="EMBL" id="AK227895">
    <property type="protein sequence ID" value="BAE99866.1"/>
    <property type="molecule type" value="mRNA"/>
</dbReference>
<dbReference type="PIR" id="T01013">
    <property type="entry name" value="T01013"/>
</dbReference>
<dbReference type="RefSeq" id="NP_181513.3">
    <property type="nucleotide sequence ID" value="NM_129542.5"/>
</dbReference>
<dbReference type="BioGRID" id="3908">
    <property type="interactions" value="5"/>
</dbReference>
<dbReference type="FunCoup" id="Q0WSN2">
    <property type="interactions" value="131"/>
</dbReference>
<dbReference type="IntAct" id="Q0WSN2">
    <property type="interactions" value="2"/>
</dbReference>
<dbReference type="STRING" id="3702.Q0WSN2"/>
<dbReference type="iPTMnet" id="Q0WSN2"/>
<dbReference type="PaxDb" id="3702-AT2G39830.1"/>
<dbReference type="ProteomicsDB" id="224676"/>
<dbReference type="EnsemblPlants" id="AT2G39830.1">
    <property type="protein sequence ID" value="AT2G39830.1"/>
    <property type="gene ID" value="AT2G39830"/>
</dbReference>
<dbReference type="GeneID" id="818570"/>
<dbReference type="Gramene" id="AT2G39830.1">
    <property type="protein sequence ID" value="AT2G39830.1"/>
    <property type="gene ID" value="AT2G39830"/>
</dbReference>
<dbReference type="KEGG" id="ath:AT2G39830"/>
<dbReference type="Araport" id="AT2G39830"/>
<dbReference type="TAIR" id="AT2G39830">
    <property type="gene designation" value="DAR2"/>
</dbReference>
<dbReference type="eggNOG" id="KOG1703">
    <property type="taxonomic scope" value="Eukaryota"/>
</dbReference>
<dbReference type="HOGENOM" id="CLU_015906_4_0_1"/>
<dbReference type="InParanoid" id="Q0WSN2"/>
<dbReference type="OrthoDB" id="25414at2759"/>
<dbReference type="PhylomeDB" id="Q0WSN2"/>
<dbReference type="PRO" id="PR:Q0WSN2"/>
<dbReference type="Proteomes" id="UP000006548">
    <property type="component" value="Chromosome 2"/>
</dbReference>
<dbReference type="ExpressionAtlas" id="Q0WSN2">
    <property type="expression patterns" value="baseline and differential"/>
</dbReference>
<dbReference type="GO" id="GO:0046872">
    <property type="term" value="F:metal ion binding"/>
    <property type="evidence" value="ECO:0007669"/>
    <property type="project" value="UniProtKB-KW"/>
</dbReference>
<dbReference type="GO" id="GO:0008233">
    <property type="term" value="F:peptidase activity"/>
    <property type="evidence" value="ECO:0000314"/>
    <property type="project" value="TAIR"/>
</dbReference>
<dbReference type="GO" id="GO:0043130">
    <property type="term" value="F:ubiquitin binding"/>
    <property type="evidence" value="ECO:0000250"/>
    <property type="project" value="UniProtKB"/>
</dbReference>
<dbReference type="GO" id="GO:0010088">
    <property type="term" value="P:phloem development"/>
    <property type="evidence" value="ECO:0000315"/>
    <property type="project" value="TAIR"/>
</dbReference>
<dbReference type="GO" id="GO:0032875">
    <property type="term" value="P:regulation of DNA endoreduplication"/>
    <property type="evidence" value="ECO:0000315"/>
    <property type="project" value="UniProtKB"/>
</dbReference>
<dbReference type="GO" id="GO:0048364">
    <property type="term" value="P:root development"/>
    <property type="evidence" value="ECO:0000315"/>
    <property type="project" value="TAIR"/>
</dbReference>
<dbReference type="CDD" id="cd09396">
    <property type="entry name" value="LIM_DA1"/>
    <property type="match status" value="1"/>
</dbReference>
<dbReference type="FunFam" id="2.10.110.10:FF:000107">
    <property type="entry name" value="Protein DA1-related 2"/>
    <property type="match status" value="1"/>
</dbReference>
<dbReference type="Gene3D" id="2.10.110.10">
    <property type="entry name" value="Cysteine Rich Protein"/>
    <property type="match status" value="1"/>
</dbReference>
<dbReference type="InterPro" id="IPR045218">
    <property type="entry name" value="DA1-like"/>
</dbReference>
<dbReference type="InterPro" id="IPR022087">
    <property type="entry name" value="DA1-like_dom"/>
</dbReference>
<dbReference type="InterPro" id="IPR001781">
    <property type="entry name" value="Znf_LIM"/>
</dbReference>
<dbReference type="PANTHER" id="PTHR24209">
    <property type="entry name" value="PROTEIN DA1-RELATED 2"/>
    <property type="match status" value="1"/>
</dbReference>
<dbReference type="PANTHER" id="PTHR24209:SF7">
    <property type="entry name" value="PROTEIN DA1-RELATED 2"/>
    <property type="match status" value="1"/>
</dbReference>
<dbReference type="Pfam" id="PF12315">
    <property type="entry name" value="DA1-like"/>
    <property type="match status" value="1"/>
</dbReference>
<dbReference type="Pfam" id="PF00412">
    <property type="entry name" value="LIM"/>
    <property type="match status" value="1"/>
</dbReference>
<dbReference type="SMART" id="SM00132">
    <property type="entry name" value="LIM"/>
    <property type="match status" value="1"/>
</dbReference>
<dbReference type="SUPFAM" id="SSF57716">
    <property type="entry name" value="Glucocorticoid receptor-like (DNA-binding domain)"/>
    <property type="match status" value="1"/>
</dbReference>
<dbReference type="PROSITE" id="PS00478">
    <property type="entry name" value="LIM_DOMAIN_1"/>
    <property type="match status" value="1"/>
</dbReference>
<dbReference type="PROSITE" id="PS50023">
    <property type="entry name" value="LIM_DOMAIN_2"/>
    <property type="match status" value="1"/>
</dbReference>
<dbReference type="PROSITE" id="PS00142">
    <property type="entry name" value="ZINC_PROTEASE"/>
    <property type="match status" value="1"/>
</dbReference>
<gene>
    <name evidence="7" type="primary">DAR2</name>
    <name evidence="8" type="synonym">LRD3</name>
    <name type="ordered locus">At2g39830</name>
    <name type="ORF">T5I7.13</name>
</gene>
<protein>
    <recommendedName>
        <fullName evidence="7">Protein DA1-related 2</fullName>
    </recommendedName>
    <alternativeName>
        <fullName evidence="8">Protein LATERAL ROOT DEVELOPMENT 3</fullName>
    </alternativeName>
</protein>
<comment type="function">
    <text evidence="3 4 5">Acts redundantly with DA1 and DAR1 to regulate endoreduplication during leaf development. Together with DA1 and DAR1, modulates the protein stability of the transcription factors TCP14 and TCP15, which repress endoreduplication by directly regulating the expression of cell-cycle genes (PubMed:25757472). Involved in root phloem development. Is an essential component of early phloem development, long-distance delivery of phloem content, and proper maintenance of root system architecture (PubMed:21749503). Involved in the control of root meristem size. Functions genetically downstream of cytokinin and IAA3 to maintain normal auxin distribution by influencing polar auxin transport. Acts through the PLETHORA pathway, upstream of PLT1 and PLT2 to influence root stem cell niche activity and thus control root meristem size (PubMed:23296689).</text>
</comment>
<comment type="subunit">
    <text evidence="5">Interacts with ubiquitin, TCP14 and TCP15.</text>
</comment>
<comment type="tissue specificity">
    <text evidence="3">Expressed in the vasculature of leaves, inflorescence stems, flowers, hypocotyls, and primary and lateral roots. In roots, expressed in phloem companion cells.</text>
</comment>
<comment type="developmental stage">
    <text evidence="5">Highly expressed during early stages leaf development, and expression decreases at the later stages of leaf development.</text>
</comment>
<comment type="domain">
    <text evidence="10">The UIM domains bind molecules modified by monoubiquitin or ubiquitin chains and promote coupled monoubiquitination.</text>
</comment>
<comment type="PTM">
    <text evidence="6">Polyubiquitinated by DA2.</text>
</comment>
<comment type="disruption phenotype">
    <text evidence="3">Reduced primary root growth, increased lateral root formation, and altered root system architecture, due to altered early phloem development.</text>
</comment>
<comment type="miscellaneous">
    <text evidence="3">Exogenous treatment with auxin rescues the phloem defects of the lrd3 knockout mutant.</text>
</comment>
<comment type="sequence caution" evidence="9">
    <conflict type="erroneous gene model prediction">
        <sequence resource="EMBL-CDS" id="AAB87132"/>
    </conflict>
</comment>
<sequence length="528" mass="59426">MDSSSSSSSSSPSSSYGVARVSHISNPCIFGEVGSSSSSTYRDKKWKLMKWVSKLFKSGSNGGGSGAHTNHHPPQFQEDENMVFPLPPSSLDDRSRGARDKEELDRSISLSLADNTKRPHGYGWSMDNNRDFPRPFHGGLNPSSFIPPYEPSYQYRRRQRICGGCNSDIGSGNYLGCMGTFFHPECFRCHSCGYAITEHEFSLSGTKPYHKLCFKELTHPKCEVCHHFIPTNDAGLIEYRCHPFWNQKYCPSHEYDKTARCCSCERLESWDVRYYTLEDGRSLCLECMETAITDTGECQPLYHAIRDYYEGMYMKLDQQIPMLLVQREALNDAIVGEKNGYHHMPETRGLCLSEEQTVTSVLRRPRLGAHRLVGMRTQPQRLTRKCEVTAILVLYGLPRLLTGAILAHELMHGWLRLNGFRNLNPEVEEGICQVLSYMWLESEVLSDPSTRNLPSTSSVATSSSSSFSNKKGGKSNVEKKLGEFFKHQIAHDASPAYGGGFRAANAAACKYGLRRTLDHIRLTGTFPL</sequence>
<evidence type="ECO:0000255" key="1">
    <source>
        <dbReference type="PROSITE-ProRule" id="PRU00125"/>
    </source>
</evidence>
<evidence type="ECO:0000256" key="2">
    <source>
        <dbReference type="SAM" id="MobiDB-lite"/>
    </source>
</evidence>
<evidence type="ECO:0000269" key="3">
    <source>
    </source>
</evidence>
<evidence type="ECO:0000269" key="4">
    <source>
    </source>
</evidence>
<evidence type="ECO:0000269" key="5">
    <source>
    </source>
</evidence>
<evidence type="ECO:0000269" key="6">
    <source>
    </source>
</evidence>
<evidence type="ECO:0000303" key="7">
    <source>
    </source>
</evidence>
<evidence type="ECO:0000303" key="8">
    <source>
    </source>
</evidence>
<evidence type="ECO:0000305" key="9"/>
<evidence type="ECO:0000305" key="10">
    <source>
    </source>
</evidence>
<name>DAR2_ARATH</name>
<keyword id="KW-0440">LIM domain</keyword>
<keyword id="KW-0479">Metal-binding</keyword>
<keyword id="KW-1185">Reference proteome</keyword>
<keyword id="KW-0677">Repeat</keyword>
<keyword id="KW-0832">Ubl conjugation</keyword>
<keyword id="KW-0862">Zinc</keyword>
<organism>
    <name type="scientific">Arabidopsis thaliana</name>
    <name type="common">Mouse-ear cress</name>
    <dbReference type="NCBI Taxonomy" id="3702"/>
    <lineage>
        <taxon>Eukaryota</taxon>
        <taxon>Viridiplantae</taxon>
        <taxon>Streptophyta</taxon>
        <taxon>Embryophyta</taxon>
        <taxon>Tracheophyta</taxon>
        <taxon>Spermatophyta</taxon>
        <taxon>Magnoliopsida</taxon>
        <taxon>eudicotyledons</taxon>
        <taxon>Gunneridae</taxon>
        <taxon>Pentapetalae</taxon>
        <taxon>rosids</taxon>
        <taxon>malvids</taxon>
        <taxon>Brassicales</taxon>
        <taxon>Brassicaceae</taxon>
        <taxon>Camelineae</taxon>
        <taxon>Arabidopsis</taxon>
    </lineage>
</organism>
<accession>Q0WSN2</accession>
<accession>O22291</accession>